<sequence>MEKAYRIKKNADFQRIYKKGHSVANRQFVVYTCNNKEIDHFRLGISVSKKLGNAVLRNKIKRAIRENFKVHKSHILAKDIIVIARQPAKDMTTLQIQNSLEHVLKIAKVFNKKIK</sequence>
<protein>
    <recommendedName>
        <fullName evidence="1">Ribonuclease P protein component</fullName>
        <shortName evidence="1">RNase P protein</shortName>
        <shortName evidence="1">RNaseP protein</shortName>
        <ecNumber evidence="1">3.1.26.5</ecNumber>
    </recommendedName>
    <alternativeName>
        <fullName evidence="1">Protein C5</fullName>
    </alternativeName>
</protein>
<reference key="1">
    <citation type="journal article" date="2004" name="Proc. Natl. Acad. Sci. U.S.A.">
        <title>Complete genomes of two clinical Staphylococcus aureus strains: evidence for the rapid evolution of virulence and drug resistance.</title>
        <authorList>
            <person name="Holden M.T.G."/>
            <person name="Feil E.J."/>
            <person name="Lindsay J.A."/>
            <person name="Peacock S.J."/>
            <person name="Day N.P.J."/>
            <person name="Enright M.C."/>
            <person name="Foster T.J."/>
            <person name="Moore C.E."/>
            <person name="Hurst L."/>
            <person name="Atkin R."/>
            <person name="Barron A."/>
            <person name="Bason N."/>
            <person name="Bentley S.D."/>
            <person name="Chillingworth C."/>
            <person name="Chillingworth T."/>
            <person name="Churcher C."/>
            <person name="Clark L."/>
            <person name="Corton C."/>
            <person name="Cronin A."/>
            <person name="Doggett J."/>
            <person name="Dowd L."/>
            <person name="Feltwell T."/>
            <person name="Hance Z."/>
            <person name="Harris B."/>
            <person name="Hauser H."/>
            <person name="Holroyd S."/>
            <person name="Jagels K."/>
            <person name="James K.D."/>
            <person name="Lennard N."/>
            <person name="Line A."/>
            <person name="Mayes R."/>
            <person name="Moule S."/>
            <person name="Mungall K."/>
            <person name="Ormond D."/>
            <person name="Quail M.A."/>
            <person name="Rabbinowitsch E."/>
            <person name="Rutherford K.M."/>
            <person name="Sanders M."/>
            <person name="Sharp S."/>
            <person name="Simmonds M."/>
            <person name="Stevens K."/>
            <person name="Whitehead S."/>
            <person name="Barrell B.G."/>
            <person name="Spratt B.G."/>
            <person name="Parkhill J."/>
        </authorList>
    </citation>
    <scope>NUCLEOTIDE SEQUENCE [LARGE SCALE GENOMIC DNA]</scope>
    <source>
        <strain>MSSA476</strain>
    </source>
</reference>
<keyword id="KW-0255">Endonuclease</keyword>
<keyword id="KW-0378">Hydrolase</keyword>
<keyword id="KW-0540">Nuclease</keyword>
<keyword id="KW-0694">RNA-binding</keyword>
<keyword id="KW-0819">tRNA processing</keyword>
<evidence type="ECO:0000255" key="1">
    <source>
        <dbReference type="HAMAP-Rule" id="MF_00227"/>
    </source>
</evidence>
<gene>
    <name evidence="1" type="primary">rnpA</name>
    <name type="ordered locus">SAS2595</name>
</gene>
<comment type="function">
    <text evidence="1">RNaseP catalyzes the removal of the 5'-leader sequence from pre-tRNA to produce the mature 5'-terminus. It can also cleave other RNA substrates such as 4.5S RNA. The protein component plays an auxiliary but essential role in vivo by binding to the 5'-leader sequence and broadening the substrate specificity of the ribozyme.</text>
</comment>
<comment type="catalytic activity">
    <reaction evidence="1">
        <text>Endonucleolytic cleavage of RNA, removing 5'-extranucleotides from tRNA precursor.</text>
        <dbReference type="EC" id="3.1.26.5"/>
    </reaction>
</comment>
<comment type="subunit">
    <text evidence="1">Consists of a catalytic RNA component (M1 or rnpB) and a protein subunit.</text>
</comment>
<comment type="similarity">
    <text evidence="1">Belongs to the RnpA family.</text>
</comment>
<dbReference type="EC" id="3.1.26.5" evidence="1"/>
<dbReference type="EMBL" id="BX571857">
    <property type="protein sequence ID" value="CAG44414.1"/>
    <property type="molecule type" value="Genomic_DNA"/>
</dbReference>
<dbReference type="SMR" id="Q6G5W3"/>
<dbReference type="KEGG" id="sas:SAS2595"/>
<dbReference type="HOGENOM" id="CLU_117179_9_1_9"/>
<dbReference type="GO" id="GO:0030677">
    <property type="term" value="C:ribonuclease P complex"/>
    <property type="evidence" value="ECO:0007669"/>
    <property type="project" value="TreeGrafter"/>
</dbReference>
<dbReference type="GO" id="GO:0042781">
    <property type="term" value="F:3'-tRNA processing endoribonuclease activity"/>
    <property type="evidence" value="ECO:0007669"/>
    <property type="project" value="TreeGrafter"/>
</dbReference>
<dbReference type="GO" id="GO:0004526">
    <property type="term" value="F:ribonuclease P activity"/>
    <property type="evidence" value="ECO:0007669"/>
    <property type="project" value="UniProtKB-UniRule"/>
</dbReference>
<dbReference type="GO" id="GO:0000049">
    <property type="term" value="F:tRNA binding"/>
    <property type="evidence" value="ECO:0007669"/>
    <property type="project" value="UniProtKB-UniRule"/>
</dbReference>
<dbReference type="GO" id="GO:0001682">
    <property type="term" value="P:tRNA 5'-leader removal"/>
    <property type="evidence" value="ECO:0007669"/>
    <property type="project" value="UniProtKB-UniRule"/>
</dbReference>
<dbReference type="FunFam" id="3.30.230.10:FF:000021">
    <property type="entry name" value="Ribonuclease P protein component"/>
    <property type="match status" value="1"/>
</dbReference>
<dbReference type="Gene3D" id="3.30.230.10">
    <property type="match status" value="1"/>
</dbReference>
<dbReference type="HAMAP" id="MF_00227">
    <property type="entry name" value="RNase_P"/>
    <property type="match status" value="1"/>
</dbReference>
<dbReference type="InterPro" id="IPR020568">
    <property type="entry name" value="Ribosomal_Su5_D2-typ_SF"/>
</dbReference>
<dbReference type="InterPro" id="IPR014721">
    <property type="entry name" value="Ribsml_uS5_D2-typ_fold_subgr"/>
</dbReference>
<dbReference type="InterPro" id="IPR000100">
    <property type="entry name" value="RNase_P"/>
</dbReference>
<dbReference type="InterPro" id="IPR020539">
    <property type="entry name" value="RNase_P_CS"/>
</dbReference>
<dbReference type="NCBIfam" id="TIGR00188">
    <property type="entry name" value="rnpA"/>
    <property type="match status" value="1"/>
</dbReference>
<dbReference type="PANTHER" id="PTHR33992">
    <property type="entry name" value="RIBONUCLEASE P PROTEIN COMPONENT"/>
    <property type="match status" value="1"/>
</dbReference>
<dbReference type="PANTHER" id="PTHR33992:SF1">
    <property type="entry name" value="RIBONUCLEASE P PROTEIN COMPONENT"/>
    <property type="match status" value="1"/>
</dbReference>
<dbReference type="Pfam" id="PF00825">
    <property type="entry name" value="Ribonuclease_P"/>
    <property type="match status" value="1"/>
</dbReference>
<dbReference type="SUPFAM" id="SSF54211">
    <property type="entry name" value="Ribosomal protein S5 domain 2-like"/>
    <property type="match status" value="1"/>
</dbReference>
<dbReference type="PROSITE" id="PS00648">
    <property type="entry name" value="RIBONUCLEASE_P"/>
    <property type="match status" value="1"/>
</dbReference>
<feature type="chain" id="PRO_0000198529" description="Ribonuclease P protein component">
    <location>
        <begin position="1"/>
        <end position="115"/>
    </location>
</feature>
<organism>
    <name type="scientific">Staphylococcus aureus (strain MSSA476)</name>
    <dbReference type="NCBI Taxonomy" id="282459"/>
    <lineage>
        <taxon>Bacteria</taxon>
        <taxon>Bacillati</taxon>
        <taxon>Bacillota</taxon>
        <taxon>Bacilli</taxon>
        <taxon>Bacillales</taxon>
        <taxon>Staphylococcaceae</taxon>
        <taxon>Staphylococcus</taxon>
    </lineage>
</organism>
<accession>Q6G5W3</accession>
<proteinExistence type="inferred from homology"/>
<name>RNPA_STAAS</name>